<comment type="function">
    <text>May be involved in transcriptional regulation.</text>
</comment>
<comment type="subcellular location">
    <subcellularLocation>
        <location evidence="7">Nucleus</location>
    </subcellularLocation>
</comment>
<comment type="alternative products">
    <event type="alternative splicing"/>
    <isoform>
        <id>Q9UJU3-1</id>
        <name>1</name>
        <sequence type="displayed"/>
    </isoform>
    <isoform>
        <id>Q9UJU3-2</id>
        <name>2</name>
        <sequence type="described" ref="VSP_039929"/>
    </isoform>
</comment>
<comment type="similarity">
    <text evidence="7">Belongs to the krueppel C2H2-type zinc-finger protein family.</text>
</comment>
<keyword id="KW-0025">Alternative splicing</keyword>
<keyword id="KW-0238">DNA-binding</keyword>
<keyword id="KW-1017">Isopeptide bond</keyword>
<keyword id="KW-0479">Metal-binding</keyword>
<keyword id="KW-0539">Nucleus</keyword>
<keyword id="KW-1267">Proteomics identification</keyword>
<keyword id="KW-1185">Reference proteome</keyword>
<keyword id="KW-0677">Repeat</keyword>
<keyword id="KW-0804">Transcription</keyword>
<keyword id="KW-0805">Transcription regulation</keyword>
<keyword id="KW-0832">Ubl conjugation</keyword>
<keyword id="KW-0862">Zinc</keyword>
<keyword id="KW-0863">Zinc-finger</keyword>
<name>ZN112_HUMAN</name>
<organism>
    <name type="scientific">Homo sapiens</name>
    <name type="common">Human</name>
    <dbReference type="NCBI Taxonomy" id="9606"/>
    <lineage>
        <taxon>Eukaryota</taxon>
        <taxon>Metazoa</taxon>
        <taxon>Chordata</taxon>
        <taxon>Craniata</taxon>
        <taxon>Vertebrata</taxon>
        <taxon>Euteleostomi</taxon>
        <taxon>Mammalia</taxon>
        <taxon>Eutheria</taxon>
        <taxon>Euarchontoglires</taxon>
        <taxon>Primates</taxon>
        <taxon>Haplorrhini</taxon>
        <taxon>Catarrhini</taxon>
        <taxon>Hominidae</taxon>
        <taxon>Homo</taxon>
    </lineage>
</organism>
<protein>
    <recommendedName>
        <fullName>Zinc finger protein 112</fullName>
        <shortName>Zfp-112</shortName>
    </recommendedName>
    <alternativeName>
        <fullName>Zinc finger protein 228</fullName>
    </alternativeName>
</protein>
<evidence type="ECO:0000255" key="1">
    <source>
        <dbReference type="PROSITE-ProRule" id="PRU00042"/>
    </source>
</evidence>
<evidence type="ECO:0000255" key="2">
    <source>
        <dbReference type="PROSITE-ProRule" id="PRU00119"/>
    </source>
</evidence>
<evidence type="ECO:0000269" key="3">
    <source>
    </source>
</evidence>
<evidence type="ECO:0000269" key="4">
    <source>
    </source>
</evidence>
<evidence type="ECO:0000269" key="5">
    <source ref="4"/>
</evidence>
<evidence type="ECO:0000303" key="6">
    <source>
    </source>
</evidence>
<evidence type="ECO:0000305" key="7"/>
<evidence type="ECO:0007744" key="8">
    <source>
    </source>
</evidence>
<sequence>MTKFQEMVTFKDVAVVFTEEELGLLDSVQRKLYRDVMLENFRNLLLVAHQPFKPDLISQLEREEKLLMVETETPRDGCSGRKNQQKMESIQEVTVSYFSPKELSSRQTWQQSAGGLIRCQDFLKVFQGKNSQLQEQGNSLGQVWAGIPVQISEDKNYIFTHIGNGSNYIKSQGYPSWRAHHSWRKMYLKESHNYQCRCQQISMKNHFCKCDSVSWLSHHNDKLEVHRKENYSCHDCGEDIMKVSLLNQESIQTEEKPYPCTGYRKAFSNDSSSEVHQQFHLEGKPYTYSSCGKGCNYSSLLHIHQNIEREDDIENSHLKSYQRVHTEEKPCKCGEYGENFNHCSPLNTYELIHTGEMSYRHNIYEKAFSHSLDLNSIFRVHTRDEPHEYEENENVFNQSSCLQVHQKIHTEEKLYTDIEYGKSFICSSNLDIQHRVHMEENSYNSEECGNGFSLASHFQDLQIVHTKEQPYKRYVCSNSFSHNLYLQGHPKIHIGEKPRKEHGNGFNWSSKLKDHQRVHTGQKPYKCNICGKGFNHRSVLNVHQRVHTGEKPYKCEECDKGFSRSSYLQAHQRVHTGEKPYKCEECGKGFSRNSYLQGHQRVHTGEKPYKCEECGKGFSRSSHLQGHQRVHTGEKPFKCEECGKGFSWSFNLQIHQRVHTGEKPYKCEECGKGFSKASTLLAHQRVHTGEKPYQCDECGKSFSQRSYLQSHQSVHSGERPYICEVCGKGFSQRAYLQGHQRVHTRVKPYKCEMCGKGFSQSSRLEAHRRVHTGGKPYKCEVCTKGFSESSRLQAHQRVHVEGRPYKCEQCGKGFSGYSSLQAHHRVHTGEKPYKCEVCGKGFSQRSNLQAHQRVHTGEKPYKCDACGKGFRWSSGLLIHQRVHSSDKFYKSEDYGKDYPSSENLHRNEDSVLF</sequence>
<gene>
    <name type="primary">ZNF112</name>
    <name type="synonym">ZFP112</name>
    <name type="synonym">ZNF228</name>
</gene>
<reference key="1">
    <citation type="journal article" date="2003" name="Genome Res.">
        <title>Differential expansion of zinc-finger transcription factor loci in homologous human and mouse gene clusters.</title>
        <authorList>
            <person name="Shannon M."/>
            <person name="Hamilton A.T."/>
            <person name="Gordon L."/>
            <person name="Branscomb E."/>
            <person name="Stubbs L."/>
        </authorList>
    </citation>
    <scope>NUCLEOTIDE SEQUENCE [MRNA] (ISOFORM 1)</scope>
    <scope>VARIANTS GLN-446 AND HIS-485</scope>
</reference>
<reference key="2">
    <citation type="submission" date="2000-10" db="EMBL/GenBank/DDBJ databases">
        <title>Sequence analysis of a 1Mb region in 19q13.2 containing a zinc finger gene cluster.</title>
        <authorList>
            <person name="Kodoyianni V."/>
            <person name="Ge Y."/>
            <person name="Krummel G.K."/>
            <person name="Kvikstad E."/>
            <person name="Grable L."/>
            <person name="Severin J."/>
            <person name="Gordon L."/>
            <person name="Shannon M."/>
            <person name="Brower A."/>
            <person name="Olsen A.S."/>
            <person name="Smith L.M."/>
        </authorList>
    </citation>
    <scope>NUCLEOTIDE SEQUENCE [GENOMIC DNA]</scope>
    <scope>ALTERNATIVE SPLICING (ISOFORM 1)</scope>
</reference>
<reference key="3">
    <citation type="journal article" date="2004" name="Nature">
        <title>The DNA sequence and biology of human chromosome 19.</title>
        <authorList>
            <person name="Grimwood J."/>
            <person name="Gordon L.A."/>
            <person name="Olsen A.S."/>
            <person name="Terry A."/>
            <person name="Schmutz J."/>
            <person name="Lamerdin J.E."/>
            <person name="Hellsten U."/>
            <person name="Goodstein D."/>
            <person name="Couronne O."/>
            <person name="Tran-Gyamfi M."/>
            <person name="Aerts A."/>
            <person name="Altherr M."/>
            <person name="Ashworth L."/>
            <person name="Bajorek E."/>
            <person name="Black S."/>
            <person name="Branscomb E."/>
            <person name="Caenepeel S."/>
            <person name="Carrano A.V."/>
            <person name="Caoile C."/>
            <person name="Chan Y.M."/>
            <person name="Christensen M."/>
            <person name="Cleland C.A."/>
            <person name="Copeland A."/>
            <person name="Dalin E."/>
            <person name="Dehal P."/>
            <person name="Denys M."/>
            <person name="Detter J.C."/>
            <person name="Escobar J."/>
            <person name="Flowers D."/>
            <person name="Fotopulos D."/>
            <person name="Garcia C."/>
            <person name="Georgescu A.M."/>
            <person name="Glavina T."/>
            <person name="Gomez M."/>
            <person name="Gonzales E."/>
            <person name="Groza M."/>
            <person name="Hammon N."/>
            <person name="Hawkins T."/>
            <person name="Haydu L."/>
            <person name="Ho I."/>
            <person name="Huang W."/>
            <person name="Israni S."/>
            <person name="Jett J."/>
            <person name="Kadner K."/>
            <person name="Kimball H."/>
            <person name="Kobayashi A."/>
            <person name="Larionov V."/>
            <person name="Leem S.-H."/>
            <person name="Lopez F."/>
            <person name="Lou Y."/>
            <person name="Lowry S."/>
            <person name="Malfatti S."/>
            <person name="Martinez D."/>
            <person name="McCready P.M."/>
            <person name="Medina C."/>
            <person name="Morgan J."/>
            <person name="Nelson K."/>
            <person name="Nolan M."/>
            <person name="Ovcharenko I."/>
            <person name="Pitluck S."/>
            <person name="Pollard M."/>
            <person name="Popkie A.P."/>
            <person name="Predki P."/>
            <person name="Quan G."/>
            <person name="Ramirez L."/>
            <person name="Rash S."/>
            <person name="Retterer J."/>
            <person name="Rodriguez A."/>
            <person name="Rogers S."/>
            <person name="Salamov A."/>
            <person name="Salazar A."/>
            <person name="She X."/>
            <person name="Smith D."/>
            <person name="Slezak T."/>
            <person name="Solovyev V."/>
            <person name="Thayer N."/>
            <person name="Tice H."/>
            <person name="Tsai M."/>
            <person name="Ustaszewska A."/>
            <person name="Vo N."/>
            <person name="Wagner M."/>
            <person name="Wheeler J."/>
            <person name="Wu K."/>
            <person name="Xie G."/>
            <person name="Yang J."/>
            <person name="Dubchak I."/>
            <person name="Furey T.S."/>
            <person name="DeJong P."/>
            <person name="Dickson M."/>
            <person name="Gordon D."/>
            <person name="Eichler E.E."/>
            <person name="Pennacchio L.A."/>
            <person name="Richardson P."/>
            <person name="Stubbs L."/>
            <person name="Rokhsar D.S."/>
            <person name="Myers R.M."/>
            <person name="Rubin E.M."/>
            <person name="Lucas S.M."/>
        </authorList>
    </citation>
    <scope>NUCLEOTIDE SEQUENCE [LARGE SCALE GENOMIC DNA]</scope>
</reference>
<reference key="4">
    <citation type="submission" date="2005-07" db="EMBL/GenBank/DDBJ databases">
        <authorList>
            <person name="Mural R.J."/>
            <person name="Istrail S."/>
            <person name="Sutton G.G."/>
            <person name="Florea L."/>
            <person name="Halpern A.L."/>
            <person name="Mobarry C.M."/>
            <person name="Lippert R."/>
            <person name="Walenz B."/>
            <person name="Shatkay H."/>
            <person name="Dew I."/>
            <person name="Miller J.R."/>
            <person name="Flanigan M.J."/>
            <person name="Edwards N.J."/>
            <person name="Bolanos R."/>
            <person name="Fasulo D."/>
            <person name="Halldorsson B.V."/>
            <person name="Hannenhalli S."/>
            <person name="Turner R."/>
            <person name="Yooseph S."/>
            <person name="Lu F."/>
            <person name="Nusskern D.R."/>
            <person name="Shue B.C."/>
            <person name="Zheng X.H."/>
            <person name="Zhong F."/>
            <person name="Delcher A.L."/>
            <person name="Huson D.H."/>
            <person name="Kravitz S.A."/>
            <person name="Mouchard L."/>
            <person name="Reinert K."/>
            <person name="Remington K.A."/>
            <person name="Clark A.G."/>
            <person name="Waterman M.S."/>
            <person name="Eichler E.E."/>
            <person name="Adams M.D."/>
            <person name="Hunkapiller M.W."/>
            <person name="Myers E.W."/>
            <person name="Venter J.C."/>
        </authorList>
    </citation>
    <scope>NUCLEOTIDE SEQUENCE [LARGE SCALE GENOMIC DNA]</scope>
    <scope>VARIANTS LEU-159; GLN-446 AND HIS-485</scope>
</reference>
<reference key="5">
    <citation type="journal article" date="2004" name="Genome Res.">
        <title>The status, quality, and expansion of the NIH full-length cDNA project: the Mammalian Gene Collection (MGC).</title>
        <authorList>
            <consortium name="The MGC Project Team"/>
        </authorList>
    </citation>
    <scope>NUCLEOTIDE SEQUENCE [LARGE SCALE MRNA] (ISOFORM 2)</scope>
    <scope>VARIANTS LEU-159; GLN-446 AND HIS-485</scope>
    <source>
        <tissue>Liver</tissue>
    </source>
</reference>
<reference key="6">
    <citation type="journal article" date="2017" name="Nat. Struct. Mol. Biol.">
        <title>Site-specific mapping of the human SUMO proteome reveals co-modification with phosphorylation.</title>
        <authorList>
            <person name="Hendriks I.A."/>
            <person name="Lyon D."/>
            <person name="Young C."/>
            <person name="Jensen L.J."/>
            <person name="Vertegaal A.C."/>
            <person name="Nielsen M.L."/>
        </authorList>
    </citation>
    <scope>SUMOYLATION [LARGE SCALE ANALYSIS] AT LYS-256 AND LYS-890</scope>
    <scope>IDENTIFICATION BY MASS SPECTROMETRY [LARGE SCALE ANALYSIS]</scope>
</reference>
<accession>Q9UJU3</accession>
<accession>A4FU53</accession>
<accession>Q9HCA7</accession>
<feature type="chain" id="PRO_0000047469" description="Zinc finger protein 112">
    <location>
        <begin position="1"/>
        <end position="913"/>
    </location>
</feature>
<feature type="domain" description="KRAB" evidence="2">
    <location>
        <begin position="8"/>
        <end position="79"/>
    </location>
</feature>
<feature type="zinc finger region" description="C2H2-type 1; degenerate" evidence="1">
    <location>
        <begin position="258"/>
        <end position="280"/>
    </location>
</feature>
<feature type="zinc finger region" description="C2H2-type 2; degenerate" evidence="1">
    <location>
        <begin position="443"/>
        <end position="465"/>
    </location>
</feature>
<feature type="zinc finger region" description="C2H2-type 3; degenerate" evidence="1">
    <location>
        <begin position="471"/>
        <end position="493"/>
    </location>
</feature>
<feature type="zinc finger region" description="C2H2-type 4; degenerate" evidence="1">
    <location>
        <begin position="497"/>
        <end position="519"/>
    </location>
</feature>
<feature type="zinc finger region" description="C2H2-type 5" evidence="1">
    <location>
        <begin position="525"/>
        <end position="547"/>
    </location>
</feature>
<feature type="zinc finger region" description="C2H2-type 6" evidence="1">
    <location>
        <begin position="553"/>
        <end position="575"/>
    </location>
</feature>
<feature type="zinc finger region" description="C2H2-type 7" evidence="1">
    <location>
        <begin position="581"/>
        <end position="603"/>
    </location>
</feature>
<feature type="zinc finger region" description="C2H2-type 8" evidence="1">
    <location>
        <begin position="609"/>
        <end position="631"/>
    </location>
</feature>
<feature type="zinc finger region" description="C2H2-type 9" evidence="1">
    <location>
        <begin position="637"/>
        <end position="659"/>
    </location>
</feature>
<feature type="zinc finger region" description="C2H2-type 10" evidence="1">
    <location>
        <begin position="665"/>
        <end position="687"/>
    </location>
</feature>
<feature type="zinc finger region" description="C2H2-type 11" evidence="1">
    <location>
        <begin position="693"/>
        <end position="715"/>
    </location>
</feature>
<feature type="zinc finger region" description="C2H2-type 12" evidence="1">
    <location>
        <begin position="721"/>
        <end position="743"/>
    </location>
</feature>
<feature type="zinc finger region" description="C2H2-type 13" evidence="1">
    <location>
        <begin position="749"/>
        <end position="771"/>
    </location>
</feature>
<feature type="zinc finger region" description="C2H2-type 14" evidence="1">
    <location>
        <begin position="777"/>
        <end position="799"/>
    </location>
</feature>
<feature type="zinc finger region" description="C2H2-type 15" evidence="1">
    <location>
        <begin position="805"/>
        <end position="827"/>
    </location>
</feature>
<feature type="zinc finger region" description="C2H2-type 16" evidence="1">
    <location>
        <begin position="833"/>
        <end position="855"/>
    </location>
</feature>
<feature type="zinc finger region" description="C2H2-type 17" evidence="1">
    <location>
        <begin position="861"/>
        <end position="883"/>
    </location>
</feature>
<feature type="cross-link" description="Glycyl lysine isopeptide (Lys-Gly) (interchain with G-Cter in SUMO2)" evidence="8">
    <location>
        <position position="256"/>
    </location>
</feature>
<feature type="cross-link" description="Glycyl lysine isopeptide (Lys-Gly) (interchain with G-Cter in SUMO2)" evidence="8">
    <location>
        <position position="890"/>
    </location>
</feature>
<feature type="splice variant" id="VSP_039929" description="In isoform 2." evidence="6">
    <location>
        <begin position="1"/>
        <end position="6"/>
    </location>
</feature>
<feature type="sequence variant" id="VAR_060414" description="In dbSNP:rs11673395.">
    <original>P</original>
    <variation>S</variation>
    <location>
        <position position="54"/>
    </location>
</feature>
<feature type="sequence variant" id="VAR_057377" description="In dbSNP:rs4280359." evidence="4 5">
    <original>F</original>
    <variation>L</variation>
    <location>
        <position position="159"/>
    </location>
</feature>
<feature type="sequence variant" id="VAR_057378" description="In dbSNP:rs16978965.">
    <original>G</original>
    <variation>E</variation>
    <location>
        <position position="163"/>
    </location>
</feature>
<feature type="sequence variant" id="VAR_057379" description="In dbSNP:rs10419604.">
    <original>T</original>
    <variation>K</variation>
    <location>
        <position position="287"/>
    </location>
</feature>
<feature type="sequence variant" id="VAR_060415" description="In dbSNP:rs2722723." evidence="3 4 5">
    <original>E</original>
    <variation>Q</variation>
    <location>
        <position position="446"/>
    </location>
</feature>
<feature type="sequence variant" id="VAR_060416" description="In dbSNP:rs2722722." evidence="3 4 5">
    <original>Y</original>
    <variation>H</variation>
    <location>
        <position position="485"/>
    </location>
</feature>
<feature type="sequence variant" id="VAR_057380" description="In dbSNP:rs2609881.">
    <original>E</original>
    <variation>A</variation>
    <location>
        <position position="780"/>
    </location>
</feature>
<feature type="sequence conflict" description="In Ref. 1; AAF12816." evidence="7" ref="1">
    <original>KFQ</original>
    <variation>VSK</variation>
    <location>
        <begin position="3"/>
        <end position="5"/>
    </location>
</feature>
<feature type="sequence conflict" description="In Ref. 1; AAF12816." evidence="7" ref="1">
    <original>A</original>
    <variation>T</variation>
    <location>
        <position position="113"/>
    </location>
</feature>
<feature type="sequence conflict" description="In Ref. 1; AAF12816." evidence="7" ref="1">
    <original>V</original>
    <variation>A</variation>
    <location>
        <position position="143"/>
    </location>
</feature>
<feature type="sequence conflict" description="In Ref. 1; AAF12816." evidence="7" ref="1">
    <original>K</original>
    <variation>E</variation>
    <location>
        <position position="222"/>
    </location>
</feature>
<feature type="sequence conflict" description="In Ref. 1; AAF12816." evidence="7" ref="1">
    <original>T</original>
    <variation>S</variation>
    <location>
        <position position="261"/>
    </location>
</feature>
<feature type="sequence conflict" description="In Ref. 1; AAF12816." evidence="7" ref="1">
    <original>N</original>
    <variation>S</variation>
    <location>
        <position position="392"/>
    </location>
</feature>
<feature type="sequence conflict" description="In Ref. 1; AAF12816." evidence="7" ref="1">
    <original>G</original>
    <variation>A</variation>
    <location>
        <position position="813"/>
    </location>
</feature>
<dbReference type="EMBL" id="AF198358">
    <property type="protein sequence ID" value="AAF12816.1"/>
    <property type="molecule type" value="mRNA"/>
</dbReference>
<dbReference type="EMBL" id="AC084239">
    <property type="protein sequence ID" value="AAG23968.1"/>
    <property type="molecule type" value="Genomic_DNA"/>
</dbReference>
<dbReference type="EMBL" id="AC138473">
    <property type="status" value="NOT_ANNOTATED_CDS"/>
    <property type="molecule type" value="Genomic_DNA"/>
</dbReference>
<dbReference type="EMBL" id="CH471126">
    <property type="protein sequence ID" value="EAW57269.1"/>
    <property type="molecule type" value="Genomic_DNA"/>
</dbReference>
<dbReference type="EMBL" id="BC101753">
    <property type="protein sequence ID" value="AAI01754.1"/>
    <property type="molecule type" value="mRNA"/>
</dbReference>
<dbReference type="CCDS" id="CCDS12637.1">
    <molecule id="Q9UJU3-2"/>
</dbReference>
<dbReference type="CCDS" id="CCDS54276.1">
    <molecule id="Q9UJU3-1"/>
</dbReference>
<dbReference type="RefSeq" id="NP_001076804.1">
    <molecule id="Q9UJU3-1"/>
    <property type="nucleotide sequence ID" value="NM_001083335.2"/>
</dbReference>
<dbReference type="RefSeq" id="NP_001335211.1">
    <molecule id="Q9UJU3-2"/>
    <property type="nucleotide sequence ID" value="NM_001348282.2"/>
</dbReference>
<dbReference type="RefSeq" id="NP_001335212.1">
    <molecule id="Q9UJU3-2"/>
    <property type="nucleotide sequence ID" value="NM_001348283.1"/>
</dbReference>
<dbReference type="SMR" id="Q9UJU3"/>
<dbReference type="BioGRID" id="113554">
    <property type="interactions" value="9"/>
</dbReference>
<dbReference type="FunCoup" id="Q9UJU3">
    <property type="interactions" value="44"/>
</dbReference>
<dbReference type="IntAct" id="Q9UJU3">
    <property type="interactions" value="7"/>
</dbReference>
<dbReference type="MINT" id="Q9UJU3"/>
<dbReference type="STRING" id="9606.ENSP00000337081"/>
<dbReference type="GlyGen" id="Q9UJU3">
    <property type="glycosylation" value="1 site, 1 O-linked glycan (1 site)"/>
</dbReference>
<dbReference type="iPTMnet" id="Q9UJU3"/>
<dbReference type="PhosphoSitePlus" id="Q9UJU3"/>
<dbReference type="BioMuta" id="ZNF112"/>
<dbReference type="DMDM" id="311033503"/>
<dbReference type="jPOST" id="Q9UJU3"/>
<dbReference type="MassIVE" id="Q9UJU3"/>
<dbReference type="PaxDb" id="9606-ENSP00000337081"/>
<dbReference type="PeptideAtlas" id="Q9UJU3"/>
<dbReference type="Antibodypedia" id="17710">
    <property type="antibodies" value="60 antibodies from 17 providers"/>
</dbReference>
<dbReference type="DNASU" id="7771"/>
<dbReference type="Ensembl" id="ENST00000337401.8">
    <molecule id="Q9UJU3-1"/>
    <property type="protein sequence ID" value="ENSP00000337081.3"/>
    <property type="gene ID" value="ENSG00000062370.17"/>
</dbReference>
<dbReference type="Ensembl" id="ENST00000354340.9">
    <molecule id="Q9UJU3-2"/>
    <property type="protein sequence ID" value="ENSP00000346305.3"/>
    <property type="gene ID" value="ENSG00000062370.17"/>
</dbReference>
<dbReference type="GeneID" id="7771"/>
<dbReference type="KEGG" id="hsa:7771"/>
<dbReference type="MANE-Select" id="ENST00000354340.9">
    <molecule id="Q9UJU3-2"/>
    <property type="protein sequence ID" value="ENSP00000346305.3"/>
    <property type="RefSeq nucleotide sequence ID" value="NM_013380.4"/>
    <property type="RefSeq protein sequence ID" value="NP_037512.3"/>
</dbReference>
<dbReference type="UCSC" id="uc002ozc.5">
    <molecule id="Q9UJU3-1"/>
    <property type="organism name" value="human"/>
</dbReference>
<dbReference type="AGR" id="HGNC:12892"/>
<dbReference type="CTD" id="7771"/>
<dbReference type="DisGeNET" id="7771"/>
<dbReference type="GeneCards" id="ZNF112"/>
<dbReference type="HGNC" id="HGNC:12892">
    <property type="gene designation" value="ZNF112"/>
</dbReference>
<dbReference type="HPA" id="ENSG00000062370">
    <property type="expression patterns" value="Low tissue specificity"/>
</dbReference>
<dbReference type="neXtProt" id="NX_Q9UJU3"/>
<dbReference type="OpenTargets" id="ENSG00000062370"/>
<dbReference type="VEuPathDB" id="HostDB:ENSG00000062370"/>
<dbReference type="eggNOG" id="KOG1721">
    <property type="taxonomic scope" value="Eukaryota"/>
</dbReference>
<dbReference type="GeneTree" id="ENSGT00940000162215"/>
<dbReference type="HOGENOM" id="CLU_002678_31_0_1"/>
<dbReference type="InParanoid" id="Q9UJU3"/>
<dbReference type="OMA" id="NYTLTHI"/>
<dbReference type="OrthoDB" id="9411774at2759"/>
<dbReference type="PAN-GO" id="Q9UJU3">
    <property type="GO annotations" value="4 GO annotations based on evolutionary models"/>
</dbReference>
<dbReference type="PhylomeDB" id="Q9UJU3"/>
<dbReference type="PathwayCommons" id="Q9UJU3"/>
<dbReference type="Reactome" id="R-HSA-212436">
    <property type="pathway name" value="Generic Transcription Pathway"/>
</dbReference>
<dbReference type="SignaLink" id="Q9UJU3"/>
<dbReference type="BioGRID-ORCS" id="7771">
    <property type="hits" value="11 hits in 1145 CRISPR screens"/>
</dbReference>
<dbReference type="ChiTaRS" id="ZNF112">
    <property type="organism name" value="human"/>
</dbReference>
<dbReference type="GenomeRNAi" id="7771"/>
<dbReference type="Pharos" id="Q9UJU3">
    <property type="development level" value="Tdark"/>
</dbReference>
<dbReference type="PRO" id="PR:Q9UJU3"/>
<dbReference type="Proteomes" id="UP000005640">
    <property type="component" value="Chromosome 19"/>
</dbReference>
<dbReference type="RNAct" id="Q9UJU3">
    <property type="molecule type" value="protein"/>
</dbReference>
<dbReference type="Bgee" id="ENSG00000062370">
    <property type="expression patterns" value="Expressed in germinal epithelium of ovary and 171 other cell types or tissues"/>
</dbReference>
<dbReference type="ExpressionAtlas" id="Q9UJU3">
    <property type="expression patterns" value="baseline and differential"/>
</dbReference>
<dbReference type="GO" id="GO:0005634">
    <property type="term" value="C:nucleus"/>
    <property type="evidence" value="ECO:0000318"/>
    <property type="project" value="GO_Central"/>
</dbReference>
<dbReference type="GO" id="GO:0003677">
    <property type="term" value="F:DNA binding"/>
    <property type="evidence" value="ECO:0007669"/>
    <property type="project" value="UniProtKB-KW"/>
</dbReference>
<dbReference type="GO" id="GO:0008270">
    <property type="term" value="F:zinc ion binding"/>
    <property type="evidence" value="ECO:0007669"/>
    <property type="project" value="UniProtKB-KW"/>
</dbReference>
<dbReference type="GO" id="GO:0006357">
    <property type="term" value="P:regulation of transcription by RNA polymerase II"/>
    <property type="evidence" value="ECO:0000318"/>
    <property type="project" value="GO_Central"/>
</dbReference>
<dbReference type="CDD" id="cd07765">
    <property type="entry name" value="KRAB_A-box"/>
    <property type="match status" value="1"/>
</dbReference>
<dbReference type="FunFam" id="3.30.160.60:FF:000274">
    <property type="entry name" value="zinc finger protein 16"/>
    <property type="match status" value="2"/>
</dbReference>
<dbReference type="FunFam" id="3.30.160.60:FF:000671">
    <property type="entry name" value="Zinc finger protein 26"/>
    <property type="match status" value="1"/>
</dbReference>
<dbReference type="FunFam" id="3.30.160.60:FF:002343">
    <property type="entry name" value="Zinc finger protein 33A"/>
    <property type="match status" value="1"/>
</dbReference>
<dbReference type="FunFam" id="3.30.160.60:FF:001498">
    <property type="entry name" value="Zinc finger protein 404"/>
    <property type="match status" value="1"/>
</dbReference>
<dbReference type="FunFam" id="3.30.160.60:FF:000663">
    <property type="entry name" value="Zinc finger protein 45"/>
    <property type="match status" value="7"/>
</dbReference>
<dbReference type="FunFam" id="3.30.160.60:FF:002357">
    <property type="entry name" value="Zinc finger protein 782"/>
    <property type="match status" value="1"/>
</dbReference>
<dbReference type="Gene3D" id="6.10.140.140">
    <property type="match status" value="1"/>
</dbReference>
<dbReference type="Gene3D" id="3.30.160.60">
    <property type="entry name" value="Classic Zinc Finger"/>
    <property type="match status" value="20"/>
</dbReference>
<dbReference type="InterPro" id="IPR001909">
    <property type="entry name" value="KRAB"/>
</dbReference>
<dbReference type="InterPro" id="IPR036051">
    <property type="entry name" value="KRAB_dom_sf"/>
</dbReference>
<dbReference type="InterPro" id="IPR036236">
    <property type="entry name" value="Znf_C2H2_sf"/>
</dbReference>
<dbReference type="InterPro" id="IPR013087">
    <property type="entry name" value="Znf_C2H2_type"/>
</dbReference>
<dbReference type="PANTHER" id="PTHR23226">
    <property type="entry name" value="ZINC FINGER AND SCAN DOMAIN-CONTAINING"/>
    <property type="match status" value="1"/>
</dbReference>
<dbReference type="PANTHER" id="PTHR23226:SF411">
    <property type="entry name" value="ZINC FINGER PROTEIN 235"/>
    <property type="match status" value="1"/>
</dbReference>
<dbReference type="Pfam" id="PF01352">
    <property type="entry name" value="KRAB"/>
    <property type="match status" value="1"/>
</dbReference>
<dbReference type="Pfam" id="PF00096">
    <property type="entry name" value="zf-C2H2"/>
    <property type="match status" value="13"/>
</dbReference>
<dbReference type="SMART" id="SM00349">
    <property type="entry name" value="KRAB"/>
    <property type="match status" value="1"/>
</dbReference>
<dbReference type="SMART" id="SM00355">
    <property type="entry name" value="ZnF_C2H2"/>
    <property type="match status" value="13"/>
</dbReference>
<dbReference type="SUPFAM" id="SSF57667">
    <property type="entry name" value="beta-beta-alpha zinc fingers"/>
    <property type="match status" value="11"/>
</dbReference>
<dbReference type="SUPFAM" id="SSF109640">
    <property type="entry name" value="KRAB domain (Kruppel-associated box)"/>
    <property type="match status" value="1"/>
</dbReference>
<dbReference type="PROSITE" id="PS50805">
    <property type="entry name" value="KRAB"/>
    <property type="match status" value="1"/>
</dbReference>
<dbReference type="PROSITE" id="PS00028">
    <property type="entry name" value="ZINC_FINGER_C2H2_1"/>
    <property type="match status" value="13"/>
</dbReference>
<dbReference type="PROSITE" id="PS50157">
    <property type="entry name" value="ZINC_FINGER_C2H2_2"/>
    <property type="match status" value="17"/>
</dbReference>
<proteinExistence type="evidence at protein level"/>